<reference key="1">
    <citation type="journal article" date="2003" name="Nature">
        <title>The genome sequence of Bacillus anthracis Ames and comparison to closely related bacteria.</title>
        <authorList>
            <person name="Read T.D."/>
            <person name="Peterson S.N."/>
            <person name="Tourasse N.J."/>
            <person name="Baillie L.W."/>
            <person name="Paulsen I.T."/>
            <person name="Nelson K.E."/>
            <person name="Tettelin H."/>
            <person name="Fouts D.E."/>
            <person name="Eisen J.A."/>
            <person name="Gill S.R."/>
            <person name="Holtzapple E.K."/>
            <person name="Okstad O.A."/>
            <person name="Helgason E."/>
            <person name="Rilstone J."/>
            <person name="Wu M."/>
            <person name="Kolonay J.F."/>
            <person name="Beanan M.J."/>
            <person name="Dodson R.J."/>
            <person name="Brinkac L.M."/>
            <person name="Gwinn M.L."/>
            <person name="DeBoy R.T."/>
            <person name="Madpu R."/>
            <person name="Daugherty S.C."/>
            <person name="Durkin A.S."/>
            <person name="Haft D.H."/>
            <person name="Nelson W.C."/>
            <person name="Peterson J.D."/>
            <person name="Pop M."/>
            <person name="Khouri H.M."/>
            <person name="Radune D."/>
            <person name="Benton J.L."/>
            <person name="Mahamoud Y."/>
            <person name="Jiang L."/>
            <person name="Hance I.R."/>
            <person name="Weidman J.F."/>
            <person name="Berry K.J."/>
            <person name="Plaut R.D."/>
            <person name="Wolf A.M."/>
            <person name="Watkins K.L."/>
            <person name="Nierman W.C."/>
            <person name="Hazen A."/>
            <person name="Cline R.T."/>
            <person name="Redmond C."/>
            <person name="Thwaite J.E."/>
            <person name="White O."/>
            <person name="Salzberg S.L."/>
            <person name="Thomason B."/>
            <person name="Friedlander A.M."/>
            <person name="Koehler T.M."/>
            <person name="Hanna P.C."/>
            <person name="Kolstoe A.-B."/>
            <person name="Fraser C.M."/>
        </authorList>
    </citation>
    <scope>NUCLEOTIDE SEQUENCE [LARGE SCALE GENOMIC DNA]</scope>
    <source>
        <strain>Ames / isolate Porton</strain>
    </source>
</reference>
<reference key="2">
    <citation type="journal article" date="2009" name="J. Bacteriol.">
        <title>The complete genome sequence of Bacillus anthracis Ames 'Ancestor'.</title>
        <authorList>
            <person name="Ravel J."/>
            <person name="Jiang L."/>
            <person name="Stanley S.T."/>
            <person name="Wilson M.R."/>
            <person name="Decker R.S."/>
            <person name="Read T.D."/>
            <person name="Worsham P."/>
            <person name="Keim P.S."/>
            <person name="Salzberg S.L."/>
            <person name="Fraser-Liggett C.M."/>
            <person name="Rasko D.A."/>
        </authorList>
    </citation>
    <scope>NUCLEOTIDE SEQUENCE [LARGE SCALE GENOMIC DNA]</scope>
    <source>
        <strain>Ames ancestor</strain>
    </source>
</reference>
<reference key="3">
    <citation type="submission" date="2004-01" db="EMBL/GenBank/DDBJ databases">
        <title>Complete genome sequence of Bacillus anthracis Sterne.</title>
        <authorList>
            <person name="Brettin T.S."/>
            <person name="Bruce D."/>
            <person name="Challacombe J.F."/>
            <person name="Gilna P."/>
            <person name="Han C."/>
            <person name="Hill K."/>
            <person name="Hitchcock P."/>
            <person name="Jackson P."/>
            <person name="Keim P."/>
            <person name="Longmire J."/>
            <person name="Lucas S."/>
            <person name="Okinaka R."/>
            <person name="Richardson P."/>
            <person name="Rubin E."/>
            <person name="Tice H."/>
        </authorList>
    </citation>
    <scope>NUCLEOTIDE SEQUENCE [LARGE SCALE GENOMIC DNA]</scope>
    <source>
        <strain>Sterne</strain>
    </source>
</reference>
<protein>
    <recommendedName>
        <fullName evidence="1">Probable glycine dehydrogenase (decarboxylating) subunit 1</fullName>
        <ecNumber evidence="1">1.4.4.2</ecNumber>
    </recommendedName>
    <alternativeName>
        <fullName evidence="1">Glycine cleavage system P-protein subunit 1</fullName>
    </alternativeName>
    <alternativeName>
        <fullName evidence="1">Glycine decarboxylase subunit 1</fullName>
    </alternativeName>
    <alternativeName>
        <fullName evidence="1">Glycine dehydrogenase (aminomethyl-transferring) subunit 1</fullName>
    </alternativeName>
</protein>
<gene>
    <name evidence="1" type="primary">gcvPA</name>
    <name type="ordered locus">BA_4448</name>
    <name type="ordered locus">GBAA_4448</name>
    <name type="ordered locus">BAS4130</name>
</gene>
<dbReference type="EC" id="1.4.4.2" evidence="1"/>
<dbReference type="EMBL" id="AE016879">
    <property type="protein sequence ID" value="AAP28162.1"/>
    <property type="molecule type" value="Genomic_DNA"/>
</dbReference>
<dbReference type="EMBL" id="AE017334">
    <property type="protein sequence ID" value="AAT33567.1"/>
    <property type="molecule type" value="Genomic_DNA"/>
</dbReference>
<dbReference type="EMBL" id="AE017225">
    <property type="protein sequence ID" value="AAT56430.1"/>
    <property type="molecule type" value="Genomic_DNA"/>
</dbReference>
<dbReference type="RefSeq" id="NP_846676.1">
    <property type="nucleotide sequence ID" value="NC_003997.3"/>
</dbReference>
<dbReference type="RefSeq" id="WP_000903231.1">
    <property type="nucleotide sequence ID" value="NZ_WXXJ01000027.1"/>
</dbReference>
<dbReference type="RefSeq" id="YP_030379.1">
    <property type="nucleotide sequence ID" value="NC_005945.1"/>
</dbReference>
<dbReference type="SMR" id="Q81M07"/>
<dbReference type="STRING" id="261594.GBAA_4448"/>
<dbReference type="DNASU" id="1087841"/>
<dbReference type="GeneID" id="93006874"/>
<dbReference type="KEGG" id="ban:BA_4448"/>
<dbReference type="KEGG" id="bar:GBAA_4448"/>
<dbReference type="KEGG" id="bat:BAS4130"/>
<dbReference type="PATRIC" id="fig|198094.11.peg.4418"/>
<dbReference type="eggNOG" id="COG0403">
    <property type="taxonomic scope" value="Bacteria"/>
</dbReference>
<dbReference type="HOGENOM" id="CLU_004620_0_2_9"/>
<dbReference type="OMA" id="LRSEFYT"/>
<dbReference type="OrthoDB" id="9771867at2"/>
<dbReference type="Proteomes" id="UP000000427">
    <property type="component" value="Chromosome"/>
</dbReference>
<dbReference type="Proteomes" id="UP000000594">
    <property type="component" value="Chromosome"/>
</dbReference>
<dbReference type="GO" id="GO:0004375">
    <property type="term" value="F:glycine dehydrogenase (decarboxylating) activity"/>
    <property type="evidence" value="ECO:0007669"/>
    <property type="project" value="UniProtKB-EC"/>
</dbReference>
<dbReference type="GO" id="GO:0019464">
    <property type="term" value="P:glycine decarboxylation via glycine cleavage system"/>
    <property type="evidence" value="ECO:0007669"/>
    <property type="project" value="UniProtKB-UniRule"/>
</dbReference>
<dbReference type="GO" id="GO:0009116">
    <property type="term" value="P:nucleoside metabolic process"/>
    <property type="evidence" value="ECO:0007669"/>
    <property type="project" value="InterPro"/>
</dbReference>
<dbReference type="CDD" id="cd00613">
    <property type="entry name" value="GDC-P"/>
    <property type="match status" value="1"/>
</dbReference>
<dbReference type="FunFam" id="3.40.640.10:FF:000113">
    <property type="entry name" value="Probable glycine dehydrogenase (decarboxylating) subunit 1"/>
    <property type="match status" value="1"/>
</dbReference>
<dbReference type="Gene3D" id="3.90.1150.10">
    <property type="entry name" value="Aspartate Aminotransferase, domain 1"/>
    <property type="match status" value="1"/>
</dbReference>
<dbReference type="Gene3D" id="3.40.640.10">
    <property type="entry name" value="Type I PLP-dependent aspartate aminotransferase-like (Major domain)"/>
    <property type="match status" value="1"/>
</dbReference>
<dbReference type="HAMAP" id="MF_00712">
    <property type="entry name" value="GcvPA"/>
    <property type="match status" value="1"/>
</dbReference>
<dbReference type="InterPro" id="IPR023010">
    <property type="entry name" value="GcvPA"/>
</dbReference>
<dbReference type="InterPro" id="IPR049315">
    <property type="entry name" value="GDC-P_N"/>
</dbReference>
<dbReference type="InterPro" id="IPR020581">
    <property type="entry name" value="GDC_P"/>
</dbReference>
<dbReference type="InterPro" id="IPR015424">
    <property type="entry name" value="PyrdxlP-dep_Trfase"/>
</dbReference>
<dbReference type="InterPro" id="IPR015421">
    <property type="entry name" value="PyrdxlP-dep_Trfase_major"/>
</dbReference>
<dbReference type="InterPro" id="IPR015422">
    <property type="entry name" value="PyrdxlP-dep_Trfase_small"/>
</dbReference>
<dbReference type="NCBIfam" id="NF001696">
    <property type="entry name" value="PRK00451.1"/>
    <property type="match status" value="1"/>
</dbReference>
<dbReference type="PANTHER" id="PTHR42806">
    <property type="entry name" value="GLYCINE CLEAVAGE SYSTEM P-PROTEIN"/>
    <property type="match status" value="1"/>
</dbReference>
<dbReference type="PANTHER" id="PTHR42806:SF1">
    <property type="entry name" value="GLYCINE DEHYDROGENASE (DECARBOXYLATING)"/>
    <property type="match status" value="1"/>
</dbReference>
<dbReference type="Pfam" id="PF02347">
    <property type="entry name" value="GDC-P"/>
    <property type="match status" value="1"/>
</dbReference>
<dbReference type="PIRSF" id="PIRSF006815">
    <property type="entry name" value="GcvPA"/>
    <property type="match status" value="1"/>
</dbReference>
<dbReference type="SUPFAM" id="SSF53383">
    <property type="entry name" value="PLP-dependent transferases"/>
    <property type="match status" value="1"/>
</dbReference>
<proteinExistence type="inferred from homology"/>
<name>GCSPA_BACAN</name>
<organism>
    <name type="scientific">Bacillus anthracis</name>
    <dbReference type="NCBI Taxonomy" id="1392"/>
    <lineage>
        <taxon>Bacteria</taxon>
        <taxon>Bacillati</taxon>
        <taxon>Bacillota</taxon>
        <taxon>Bacilli</taxon>
        <taxon>Bacillales</taxon>
        <taxon>Bacillaceae</taxon>
        <taxon>Bacillus</taxon>
        <taxon>Bacillus cereus group</taxon>
    </lineage>
</organism>
<evidence type="ECO:0000255" key="1">
    <source>
        <dbReference type="HAMAP-Rule" id="MF_00712"/>
    </source>
</evidence>
<keyword id="KW-0560">Oxidoreductase</keyword>
<keyword id="KW-1185">Reference proteome</keyword>
<feature type="chain" id="PRO_0000166954" description="Probable glycine dehydrogenase (decarboxylating) subunit 1">
    <location>
        <begin position="1"/>
        <end position="447"/>
    </location>
</feature>
<sequence>MLHRYLPMTEEDKKEMLQTIGVQTIDELFSDIPESVRFKGDLKIKEAKSEPELLKELSQMASKNANLKEYASFLGAGVYDHYAPVIVDHVISRSEFYTAYTPYQPEISQGELQAIFEFQTMICELTGMDVANSSMYDGGTALAEAAMLAAGHTRKKKILVSSAVHPESRAVLETYAKGQHLEVVEINHKDGVTDLDVLQSEVDDTVACVIVQYPNFFGQVEKLADIEKIVHQQKSLFIVSSNPLSLGALTPPGKFGADIVIGDAQPFGIPTQFGGPHCGYFATTKAFMRKIPGRLVGQTVDSDGKRGFVLTLQAREQHIRRDKATSNICSNQALNALAASVAMTALGKQGVKEMARQNISKAQYAKRQFEAKGFTVTFAGPFFNEFVVDCKRPVKEVNDALLQKNIIGGYDLGRDYKEHENHMLVAVTELRTKEEIDTLVNEMGAIQ</sequence>
<accession>Q81M07</accession>
<accession>Q6HTF9</accession>
<accession>Q6KMQ2</accession>
<comment type="function">
    <text evidence="1">The glycine cleavage system catalyzes the degradation of glycine. The P protein binds the alpha-amino group of glycine through its pyridoxal phosphate cofactor; CO(2) is released and the remaining methylamine moiety is then transferred to the lipoamide cofactor of the H protein.</text>
</comment>
<comment type="catalytic activity">
    <reaction evidence="1">
        <text>N(6)-[(R)-lipoyl]-L-lysyl-[glycine-cleavage complex H protein] + glycine + H(+) = N(6)-[(R)-S(8)-aminomethyldihydrolipoyl]-L-lysyl-[glycine-cleavage complex H protein] + CO2</text>
        <dbReference type="Rhea" id="RHEA:24304"/>
        <dbReference type="Rhea" id="RHEA-COMP:10494"/>
        <dbReference type="Rhea" id="RHEA-COMP:10495"/>
        <dbReference type="ChEBI" id="CHEBI:15378"/>
        <dbReference type="ChEBI" id="CHEBI:16526"/>
        <dbReference type="ChEBI" id="CHEBI:57305"/>
        <dbReference type="ChEBI" id="CHEBI:83099"/>
        <dbReference type="ChEBI" id="CHEBI:83143"/>
        <dbReference type="EC" id="1.4.4.2"/>
    </reaction>
</comment>
<comment type="subunit">
    <text evidence="1">The glycine cleavage system is composed of four proteins: P, T, L and H. In this organism, the P 'protein' is a heterodimer of two subunits.</text>
</comment>
<comment type="similarity">
    <text evidence="1">Belongs to the GcvP family. N-terminal subunit subfamily.</text>
</comment>